<name>PURA_WOLPM</name>
<accession>Q73I44</accession>
<gene>
    <name evidence="1" type="primary">purA</name>
    <name type="ordered locus">WD_0337</name>
</gene>
<organism>
    <name type="scientific">Wolbachia pipientis wMel</name>
    <dbReference type="NCBI Taxonomy" id="163164"/>
    <lineage>
        <taxon>Bacteria</taxon>
        <taxon>Pseudomonadati</taxon>
        <taxon>Pseudomonadota</taxon>
        <taxon>Alphaproteobacteria</taxon>
        <taxon>Rickettsiales</taxon>
        <taxon>Anaplasmataceae</taxon>
        <taxon>Wolbachieae</taxon>
        <taxon>Wolbachia</taxon>
    </lineage>
</organism>
<feature type="chain" id="PRO_0000095259" description="Adenylosuccinate synthetase">
    <location>
        <begin position="1"/>
        <end position="425"/>
    </location>
</feature>
<feature type="active site" description="Proton acceptor" evidence="1">
    <location>
        <position position="13"/>
    </location>
</feature>
<feature type="active site" description="Proton donor" evidence="1">
    <location>
        <position position="41"/>
    </location>
</feature>
<feature type="binding site" evidence="1">
    <location>
        <begin position="12"/>
        <end position="18"/>
    </location>
    <ligand>
        <name>GTP</name>
        <dbReference type="ChEBI" id="CHEBI:37565"/>
    </ligand>
</feature>
<feature type="binding site" description="in other chain" evidence="1">
    <location>
        <begin position="13"/>
        <end position="16"/>
    </location>
    <ligand>
        <name>IMP</name>
        <dbReference type="ChEBI" id="CHEBI:58053"/>
        <note>ligand shared between dimeric partners</note>
    </ligand>
</feature>
<feature type="binding site" evidence="1">
    <location>
        <position position="13"/>
    </location>
    <ligand>
        <name>Mg(2+)</name>
        <dbReference type="ChEBI" id="CHEBI:18420"/>
    </ligand>
</feature>
<feature type="binding site" description="in other chain" evidence="1">
    <location>
        <begin position="38"/>
        <end position="41"/>
    </location>
    <ligand>
        <name>IMP</name>
        <dbReference type="ChEBI" id="CHEBI:58053"/>
        <note>ligand shared between dimeric partners</note>
    </ligand>
</feature>
<feature type="binding site" evidence="1">
    <location>
        <begin position="40"/>
        <end position="42"/>
    </location>
    <ligand>
        <name>GTP</name>
        <dbReference type="ChEBI" id="CHEBI:37565"/>
    </ligand>
</feature>
<feature type="binding site" evidence="1">
    <location>
        <position position="40"/>
    </location>
    <ligand>
        <name>Mg(2+)</name>
        <dbReference type="ChEBI" id="CHEBI:18420"/>
    </ligand>
</feature>
<feature type="binding site" description="in other chain" evidence="1">
    <location>
        <position position="130"/>
    </location>
    <ligand>
        <name>IMP</name>
        <dbReference type="ChEBI" id="CHEBI:58053"/>
        <note>ligand shared between dimeric partners</note>
    </ligand>
</feature>
<feature type="binding site" evidence="1">
    <location>
        <position position="144"/>
    </location>
    <ligand>
        <name>IMP</name>
        <dbReference type="ChEBI" id="CHEBI:58053"/>
        <note>ligand shared between dimeric partners</note>
    </ligand>
</feature>
<feature type="binding site" description="in other chain" evidence="1">
    <location>
        <position position="224"/>
    </location>
    <ligand>
        <name>IMP</name>
        <dbReference type="ChEBI" id="CHEBI:58053"/>
        <note>ligand shared between dimeric partners</note>
    </ligand>
</feature>
<feature type="binding site" description="in other chain" evidence="1">
    <location>
        <position position="239"/>
    </location>
    <ligand>
        <name>IMP</name>
        <dbReference type="ChEBI" id="CHEBI:58053"/>
        <note>ligand shared between dimeric partners</note>
    </ligand>
</feature>
<feature type="binding site" evidence="1">
    <location>
        <begin position="297"/>
        <end position="303"/>
    </location>
    <ligand>
        <name>substrate</name>
    </ligand>
</feature>
<feature type="binding site" description="in other chain" evidence="1">
    <location>
        <position position="301"/>
    </location>
    <ligand>
        <name>IMP</name>
        <dbReference type="ChEBI" id="CHEBI:58053"/>
        <note>ligand shared between dimeric partners</note>
    </ligand>
</feature>
<feature type="binding site" evidence="1">
    <location>
        <position position="303"/>
    </location>
    <ligand>
        <name>GTP</name>
        <dbReference type="ChEBI" id="CHEBI:37565"/>
    </ligand>
</feature>
<feature type="binding site" evidence="1">
    <location>
        <begin position="329"/>
        <end position="331"/>
    </location>
    <ligand>
        <name>GTP</name>
        <dbReference type="ChEBI" id="CHEBI:37565"/>
    </ligand>
</feature>
<feature type="binding site" evidence="1">
    <location>
        <begin position="411"/>
        <end position="413"/>
    </location>
    <ligand>
        <name>GTP</name>
        <dbReference type="ChEBI" id="CHEBI:37565"/>
    </ligand>
</feature>
<evidence type="ECO:0000255" key="1">
    <source>
        <dbReference type="HAMAP-Rule" id="MF_00011"/>
    </source>
</evidence>
<dbReference type="EC" id="6.3.4.4" evidence="1"/>
<dbReference type="EMBL" id="AE017196">
    <property type="protein sequence ID" value="AAS14068.1"/>
    <property type="molecule type" value="Genomic_DNA"/>
</dbReference>
<dbReference type="RefSeq" id="WP_010962523.1">
    <property type="nucleotide sequence ID" value="NZ_OX384529.1"/>
</dbReference>
<dbReference type="SMR" id="Q73I44"/>
<dbReference type="EnsemblBacteria" id="AAS14068">
    <property type="protein sequence ID" value="AAS14068"/>
    <property type="gene ID" value="WD_0337"/>
</dbReference>
<dbReference type="KEGG" id="wol:WD_0337"/>
<dbReference type="eggNOG" id="COG0104">
    <property type="taxonomic scope" value="Bacteria"/>
</dbReference>
<dbReference type="UniPathway" id="UPA00075">
    <property type="reaction ID" value="UER00335"/>
</dbReference>
<dbReference type="Proteomes" id="UP000008215">
    <property type="component" value="Chromosome"/>
</dbReference>
<dbReference type="GO" id="GO:0005737">
    <property type="term" value="C:cytoplasm"/>
    <property type="evidence" value="ECO:0007669"/>
    <property type="project" value="UniProtKB-SubCell"/>
</dbReference>
<dbReference type="GO" id="GO:0004019">
    <property type="term" value="F:adenylosuccinate synthase activity"/>
    <property type="evidence" value="ECO:0007669"/>
    <property type="project" value="UniProtKB-UniRule"/>
</dbReference>
<dbReference type="GO" id="GO:0005525">
    <property type="term" value="F:GTP binding"/>
    <property type="evidence" value="ECO:0007669"/>
    <property type="project" value="UniProtKB-UniRule"/>
</dbReference>
<dbReference type="GO" id="GO:0000287">
    <property type="term" value="F:magnesium ion binding"/>
    <property type="evidence" value="ECO:0007669"/>
    <property type="project" value="UniProtKB-UniRule"/>
</dbReference>
<dbReference type="GO" id="GO:0044208">
    <property type="term" value="P:'de novo' AMP biosynthetic process"/>
    <property type="evidence" value="ECO:0007669"/>
    <property type="project" value="UniProtKB-UniRule"/>
</dbReference>
<dbReference type="GO" id="GO:0046040">
    <property type="term" value="P:IMP metabolic process"/>
    <property type="evidence" value="ECO:0007669"/>
    <property type="project" value="TreeGrafter"/>
</dbReference>
<dbReference type="CDD" id="cd03108">
    <property type="entry name" value="AdSS"/>
    <property type="match status" value="1"/>
</dbReference>
<dbReference type="FunFam" id="1.10.300.10:FF:000001">
    <property type="entry name" value="Adenylosuccinate synthetase"/>
    <property type="match status" value="1"/>
</dbReference>
<dbReference type="FunFam" id="3.90.170.10:FF:000001">
    <property type="entry name" value="Adenylosuccinate synthetase"/>
    <property type="match status" value="1"/>
</dbReference>
<dbReference type="Gene3D" id="3.40.440.10">
    <property type="entry name" value="Adenylosuccinate Synthetase, subunit A, domain 1"/>
    <property type="match status" value="1"/>
</dbReference>
<dbReference type="Gene3D" id="1.10.300.10">
    <property type="entry name" value="Adenylosuccinate Synthetase, subunit A, domain 2"/>
    <property type="match status" value="1"/>
</dbReference>
<dbReference type="Gene3D" id="3.90.170.10">
    <property type="entry name" value="Adenylosuccinate Synthetase, subunit A, domain 3"/>
    <property type="match status" value="1"/>
</dbReference>
<dbReference type="HAMAP" id="MF_00011">
    <property type="entry name" value="Adenylosucc_synth"/>
    <property type="match status" value="1"/>
</dbReference>
<dbReference type="InterPro" id="IPR018220">
    <property type="entry name" value="Adenylosuccin_syn_GTP-bd"/>
</dbReference>
<dbReference type="InterPro" id="IPR033128">
    <property type="entry name" value="Adenylosuccin_syn_Lys_AS"/>
</dbReference>
<dbReference type="InterPro" id="IPR042109">
    <property type="entry name" value="Adenylosuccinate_synth_dom1"/>
</dbReference>
<dbReference type="InterPro" id="IPR042110">
    <property type="entry name" value="Adenylosuccinate_synth_dom2"/>
</dbReference>
<dbReference type="InterPro" id="IPR042111">
    <property type="entry name" value="Adenylosuccinate_synth_dom3"/>
</dbReference>
<dbReference type="InterPro" id="IPR001114">
    <property type="entry name" value="Adenylosuccinate_synthetase"/>
</dbReference>
<dbReference type="InterPro" id="IPR027417">
    <property type="entry name" value="P-loop_NTPase"/>
</dbReference>
<dbReference type="NCBIfam" id="NF002223">
    <property type="entry name" value="PRK01117.1"/>
    <property type="match status" value="1"/>
</dbReference>
<dbReference type="NCBIfam" id="TIGR00184">
    <property type="entry name" value="purA"/>
    <property type="match status" value="1"/>
</dbReference>
<dbReference type="PANTHER" id="PTHR11846">
    <property type="entry name" value="ADENYLOSUCCINATE SYNTHETASE"/>
    <property type="match status" value="1"/>
</dbReference>
<dbReference type="PANTHER" id="PTHR11846:SF0">
    <property type="entry name" value="ADENYLOSUCCINATE SYNTHETASE"/>
    <property type="match status" value="1"/>
</dbReference>
<dbReference type="Pfam" id="PF00709">
    <property type="entry name" value="Adenylsucc_synt"/>
    <property type="match status" value="1"/>
</dbReference>
<dbReference type="SMART" id="SM00788">
    <property type="entry name" value="Adenylsucc_synt"/>
    <property type="match status" value="1"/>
</dbReference>
<dbReference type="SUPFAM" id="SSF52540">
    <property type="entry name" value="P-loop containing nucleoside triphosphate hydrolases"/>
    <property type="match status" value="1"/>
</dbReference>
<dbReference type="PROSITE" id="PS01266">
    <property type="entry name" value="ADENYLOSUCCIN_SYN_1"/>
    <property type="match status" value="1"/>
</dbReference>
<dbReference type="PROSITE" id="PS00513">
    <property type="entry name" value="ADENYLOSUCCIN_SYN_2"/>
    <property type="match status" value="1"/>
</dbReference>
<protein>
    <recommendedName>
        <fullName evidence="1">Adenylosuccinate synthetase</fullName>
        <shortName evidence="1">AMPSase</shortName>
        <shortName evidence="1">AdSS</shortName>
        <ecNumber evidence="1">6.3.4.4</ecNumber>
    </recommendedName>
    <alternativeName>
        <fullName evidence="1">IMP--aspartate ligase</fullName>
    </alternativeName>
</protein>
<comment type="function">
    <text evidence="1">Plays an important role in the de novo pathway of purine nucleotide biosynthesis. Catalyzes the first committed step in the biosynthesis of AMP from IMP.</text>
</comment>
<comment type="catalytic activity">
    <reaction evidence="1">
        <text>IMP + L-aspartate + GTP = N(6)-(1,2-dicarboxyethyl)-AMP + GDP + phosphate + 2 H(+)</text>
        <dbReference type="Rhea" id="RHEA:15753"/>
        <dbReference type="ChEBI" id="CHEBI:15378"/>
        <dbReference type="ChEBI" id="CHEBI:29991"/>
        <dbReference type="ChEBI" id="CHEBI:37565"/>
        <dbReference type="ChEBI" id="CHEBI:43474"/>
        <dbReference type="ChEBI" id="CHEBI:57567"/>
        <dbReference type="ChEBI" id="CHEBI:58053"/>
        <dbReference type="ChEBI" id="CHEBI:58189"/>
        <dbReference type="EC" id="6.3.4.4"/>
    </reaction>
</comment>
<comment type="cofactor">
    <cofactor evidence="1">
        <name>Mg(2+)</name>
        <dbReference type="ChEBI" id="CHEBI:18420"/>
    </cofactor>
    <text evidence="1">Binds 1 Mg(2+) ion per subunit.</text>
</comment>
<comment type="pathway">
    <text evidence="1">Purine metabolism; AMP biosynthesis via de novo pathway; AMP from IMP: step 1/2.</text>
</comment>
<comment type="subunit">
    <text evidence="1">Homodimer.</text>
</comment>
<comment type="subcellular location">
    <subcellularLocation>
        <location evidence="1">Cytoplasm</location>
    </subcellularLocation>
</comment>
<comment type="similarity">
    <text evidence="1">Belongs to the adenylosuccinate synthetase family.</text>
</comment>
<reference key="1">
    <citation type="journal article" date="2004" name="PLoS Biol.">
        <title>Phylogenomics of the reproductive parasite Wolbachia pipientis wMel: a streamlined genome overrun by mobile genetic elements.</title>
        <authorList>
            <person name="Wu M."/>
            <person name="Sun L.V."/>
            <person name="Vamathevan J.J."/>
            <person name="Riegler M."/>
            <person name="DeBoy R.T."/>
            <person name="Brownlie J.C."/>
            <person name="McGraw E.A."/>
            <person name="Martin W."/>
            <person name="Esser C."/>
            <person name="Ahmadinejad N."/>
            <person name="Wiegand C."/>
            <person name="Madupu R."/>
            <person name="Beanan M.J."/>
            <person name="Brinkac L.M."/>
            <person name="Daugherty S.C."/>
            <person name="Durkin A.S."/>
            <person name="Kolonay J.F."/>
            <person name="Nelson W.C."/>
            <person name="Mohamoud Y."/>
            <person name="Lee P."/>
            <person name="Berry K.J."/>
            <person name="Young M.B."/>
            <person name="Utterback T.R."/>
            <person name="Weidman J.F."/>
            <person name="Nierman W.C."/>
            <person name="Paulsen I.T."/>
            <person name="Nelson K.E."/>
            <person name="Tettelin H."/>
            <person name="O'Neill S.L."/>
            <person name="Eisen J.A."/>
        </authorList>
    </citation>
    <scope>NUCLEOTIDE SEQUENCE [LARGE SCALE GENOMIC DNA]</scope>
</reference>
<sequence length="425" mass="47194">MNNIVIVGLQWGDEGKGKIVDYLSENADVVVRFQGGNNAGHTIVVDDEVYKLNLLPSAVLRPGKISIIGNGVALDPHALISEIESLKVKGVDVNYNNLMVSESCPLILSIHKDKEKLFEDLNGNHKIGTTNKGIGPCYEDKVGRRAIRLCDLENADELNKRVDILLNYHNAIRKGLNYQVVKKEEILKEIQEISEKILSYKKPVWKILNDLMKEGKKIIFEGAQGAFLDIDHGTYPFVTSSNTVASQAITGSGLSSNAYIIGVVKAYTTRVGNGPFPTEQKNEVGDSLFTIGKELGTVSNRRRRCGWFDAVLVRQAVQLSGVSSIVLTKLDVLNSFDTIKICTGYKYSGKMYDYLPASHSIQGELEPIYEEFPGWKENTQGKRSIETLPINLIKYIEGLEKLIGVPIHLISTSPKREDVIKLKDF</sequence>
<proteinExistence type="inferred from homology"/>
<keyword id="KW-0963">Cytoplasm</keyword>
<keyword id="KW-0342">GTP-binding</keyword>
<keyword id="KW-0436">Ligase</keyword>
<keyword id="KW-0460">Magnesium</keyword>
<keyword id="KW-0479">Metal-binding</keyword>
<keyword id="KW-0547">Nucleotide-binding</keyword>
<keyword id="KW-0658">Purine biosynthesis</keyword>